<accession>Q6ABW9</accession>
<organism>
    <name type="scientific">Leifsonia xyli subsp. xyli (strain CTCB07)</name>
    <dbReference type="NCBI Taxonomy" id="281090"/>
    <lineage>
        <taxon>Bacteria</taxon>
        <taxon>Bacillati</taxon>
        <taxon>Actinomycetota</taxon>
        <taxon>Actinomycetes</taxon>
        <taxon>Micrococcales</taxon>
        <taxon>Microbacteriaceae</taxon>
        <taxon>Leifsonia</taxon>
    </lineage>
</organism>
<comment type="function">
    <text evidence="1">Binds as a heterodimer with protein bS6 to the central domain of the 16S rRNA, where it helps stabilize the platform of the 30S subunit.</text>
</comment>
<comment type="subunit">
    <text evidence="1">Part of the 30S ribosomal subunit. Forms a tight heterodimer with protein bS6.</text>
</comment>
<comment type="similarity">
    <text evidence="1">Belongs to the bacterial ribosomal protein bS18 family.</text>
</comment>
<keyword id="KW-1185">Reference proteome</keyword>
<keyword id="KW-0687">Ribonucleoprotein</keyword>
<keyword id="KW-0689">Ribosomal protein</keyword>
<keyword id="KW-0694">RNA-binding</keyword>
<keyword id="KW-0699">rRNA-binding</keyword>
<proteinExistence type="inferred from homology"/>
<evidence type="ECO:0000255" key="1">
    <source>
        <dbReference type="HAMAP-Rule" id="MF_00270"/>
    </source>
</evidence>
<evidence type="ECO:0000256" key="2">
    <source>
        <dbReference type="SAM" id="MobiDB-lite"/>
    </source>
</evidence>
<evidence type="ECO:0000305" key="3"/>
<name>RS18_LEIXX</name>
<protein>
    <recommendedName>
        <fullName evidence="1">Small ribosomal subunit protein bS18</fullName>
    </recommendedName>
    <alternativeName>
        <fullName evidence="3">30S ribosomal protein S18</fullName>
    </alternativeName>
</protein>
<sequence length="87" mass="9492">MAGKSSGDRRKPIRKGKDGKNAAPAKSVRVGVIDYKDVATLRKFISERGKIRALRITGVSVQEQRLIARAVKNAREMALLPYAGSGR</sequence>
<gene>
    <name evidence="1" type="primary">rpsR</name>
    <name type="ordered locus">Lxx25160</name>
</gene>
<feature type="chain" id="PRO_0000111168" description="Small ribosomal subunit protein bS18">
    <location>
        <begin position="1"/>
        <end position="87"/>
    </location>
</feature>
<feature type="region of interest" description="Disordered" evidence="2">
    <location>
        <begin position="1"/>
        <end position="24"/>
    </location>
</feature>
<feature type="compositionally biased region" description="Basic and acidic residues" evidence="2">
    <location>
        <begin position="1"/>
        <end position="20"/>
    </location>
</feature>
<reference key="1">
    <citation type="journal article" date="2004" name="Mol. Plant Microbe Interact.">
        <title>The genome sequence of the Gram-positive sugarcane pathogen Leifsonia xyli subsp. xyli.</title>
        <authorList>
            <person name="Monteiro-Vitorello C.B."/>
            <person name="Camargo L.E.A."/>
            <person name="Van Sluys M.A."/>
            <person name="Kitajima J.P."/>
            <person name="Truffi D."/>
            <person name="do Amaral A.M."/>
            <person name="Harakava R."/>
            <person name="de Oliveira J.C.F."/>
            <person name="Wood D."/>
            <person name="de Oliveira M.C."/>
            <person name="Miyaki C.Y."/>
            <person name="Takita M.A."/>
            <person name="da Silva A.C.R."/>
            <person name="Furlan L.R."/>
            <person name="Carraro D.M."/>
            <person name="Camarotte G."/>
            <person name="Almeida N.F. Jr."/>
            <person name="Carrer H."/>
            <person name="Coutinho L.L."/>
            <person name="El-Dorry H.A."/>
            <person name="Ferro M.I.T."/>
            <person name="Gagliardi P.R."/>
            <person name="Giglioti E."/>
            <person name="Goldman M.H.S."/>
            <person name="Goldman G.H."/>
            <person name="Kimura E.T."/>
            <person name="Ferro E.S."/>
            <person name="Kuramae E.E."/>
            <person name="Lemos E.G.M."/>
            <person name="Lemos M.V.F."/>
            <person name="Mauro S.M.Z."/>
            <person name="Machado M.A."/>
            <person name="Marino C.L."/>
            <person name="Menck C.F."/>
            <person name="Nunes L.R."/>
            <person name="Oliveira R.C."/>
            <person name="Pereira G.G."/>
            <person name="Siqueira W."/>
            <person name="de Souza A.A."/>
            <person name="Tsai S.M."/>
            <person name="Zanca A.S."/>
            <person name="Simpson A.J.G."/>
            <person name="Brumbley S.M."/>
            <person name="Setubal J.C."/>
        </authorList>
    </citation>
    <scope>NUCLEOTIDE SEQUENCE [LARGE SCALE GENOMIC DNA]</scope>
    <source>
        <strain>CTCB07</strain>
    </source>
</reference>
<dbReference type="EMBL" id="AE016822">
    <property type="protein sequence ID" value="AAT90123.1"/>
    <property type="molecule type" value="Genomic_DNA"/>
</dbReference>
<dbReference type="RefSeq" id="WP_011187102.1">
    <property type="nucleotide sequence ID" value="NC_006087.1"/>
</dbReference>
<dbReference type="SMR" id="Q6ABW9"/>
<dbReference type="STRING" id="281090.Lxx25160"/>
<dbReference type="KEGG" id="lxx:Lxx25160"/>
<dbReference type="eggNOG" id="COG0238">
    <property type="taxonomic scope" value="Bacteria"/>
</dbReference>
<dbReference type="HOGENOM" id="CLU_148710_1_0_11"/>
<dbReference type="Proteomes" id="UP000001306">
    <property type="component" value="Chromosome"/>
</dbReference>
<dbReference type="GO" id="GO:0022627">
    <property type="term" value="C:cytosolic small ribosomal subunit"/>
    <property type="evidence" value="ECO:0007669"/>
    <property type="project" value="TreeGrafter"/>
</dbReference>
<dbReference type="GO" id="GO:0070181">
    <property type="term" value="F:small ribosomal subunit rRNA binding"/>
    <property type="evidence" value="ECO:0007669"/>
    <property type="project" value="TreeGrafter"/>
</dbReference>
<dbReference type="GO" id="GO:0003735">
    <property type="term" value="F:structural constituent of ribosome"/>
    <property type="evidence" value="ECO:0007669"/>
    <property type="project" value="InterPro"/>
</dbReference>
<dbReference type="GO" id="GO:0006412">
    <property type="term" value="P:translation"/>
    <property type="evidence" value="ECO:0007669"/>
    <property type="project" value="UniProtKB-UniRule"/>
</dbReference>
<dbReference type="Gene3D" id="4.10.640.10">
    <property type="entry name" value="Ribosomal protein S18"/>
    <property type="match status" value="1"/>
</dbReference>
<dbReference type="HAMAP" id="MF_00270">
    <property type="entry name" value="Ribosomal_bS18"/>
    <property type="match status" value="1"/>
</dbReference>
<dbReference type="InterPro" id="IPR001648">
    <property type="entry name" value="Ribosomal_bS18"/>
</dbReference>
<dbReference type="InterPro" id="IPR018275">
    <property type="entry name" value="Ribosomal_bS18_CS"/>
</dbReference>
<dbReference type="InterPro" id="IPR036870">
    <property type="entry name" value="Ribosomal_bS18_sf"/>
</dbReference>
<dbReference type="NCBIfam" id="TIGR00165">
    <property type="entry name" value="S18"/>
    <property type="match status" value="1"/>
</dbReference>
<dbReference type="PANTHER" id="PTHR13479">
    <property type="entry name" value="30S RIBOSOMAL PROTEIN S18"/>
    <property type="match status" value="1"/>
</dbReference>
<dbReference type="PANTHER" id="PTHR13479:SF40">
    <property type="entry name" value="SMALL RIBOSOMAL SUBUNIT PROTEIN BS18M"/>
    <property type="match status" value="1"/>
</dbReference>
<dbReference type="Pfam" id="PF01084">
    <property type="entry name" value="Ribosomal_S18"/>
    <property type="match status" value="1"/>
</dbReference>
<dbReference type="PRINTS" id="PR00974">
    <property type="entry name" value="RIBOSOMALS18"/>
</dbReference>
<dbReference type="SUPFAM" id="SSF46911">
    <property type="entry name" value="Ribosomal protein S18"/>
    <property type="match status" value="1"/>
</dbReference>
<dbReference type="PROSITE" id="PS00057">
    <property type="entry name" value="RIBOSOMAL_S18"/>
    <property type="match status" value="1"/>
</dbReference>